<proteinExistence type="evidence at protein level"/>
<reference key="1">
    <citation type="journal article" date="2010" name="Appl. Environ. Microbiol.">
        <title>Cloning and biochemical characterization of a novel carbendazim (methyl-1H-benzimidazol-2-ylcarbamate)-hydrolyzing esterase from the newly isolated Nocardioides sp. strain SG-4G and its potential for use in enzymatic bioremediation.</title>
        <authorList>
            <person name="Pandey G."/>
            <person name="Dorrian S.J."/>
            <person name="Russell R.J."/>
            <person name="Brearley C."/>
            <person name="Kotsonis S."/>
            <person name="Oakeshott J.G."/>
        </authorList>
    </citation>
    <scope>NUCLEOTIDE SEQUENCE [GENOMIC DNA]</scope>
    <scope>PROTEIN SEQUENCE OF 1-16 AND 97-106</scope>
    <scope>FUNCTION</scope>
    <scope>CATALYTIC ACTIVITY</scope>
    <scope>BIOPHYSICOCHEMICAL PROPERTIES</scope>
    <scope>SUBCELLULAR LOCATION</scope>
    <scope>INDUCTION</scope>
    <scope>BIOTECHNOLOGY</scope>
    <source>
        <strain>SG-4G</strain>
    </source>
</reference>
<reference key="2">
    <citation type="journal article" date="2023" name="FEMS Microbiol. Lett.">
        <title>Wide substrate range for a candidate bioremediation enzyme isolated from Nocardioides sp. strain SG-4 G.</title>
        <authorList>
            <person name="Krishnani K.K."/>
            <person name="Oakeshott J.G."/>
            <person name="Pandey G."/>
        </authorList>
    </citation>
    <scope>FUNCTION</scope>
    <scope>BIOTECHNOLOGY</scope>
    <source>
        <strain>SG-4G</strain>
    </source>
</reference>
<name>MHEI_NOCS4</name>
<dbReference type="EC" id="3.1.1.122" evidence="2"/>
<dbReference type="EMBL" id="GQ454794">
    <property type="protein sequence ID" value="ACV42482.1"/>
    <property type="molecule type" value="Genomic_DNA"/>
</dbReference>
<dbReference type="SMR" id="C8CP46"/>
<dbReference type="ESTHER" id="9acto-c8cp46">
    <property type="family name" value="HNLyase_Bact"/>
</dbReference>
<dbReference type="KEGG" id="ag:ACV42482"/>
<dbReference type="GO" id="GO:0005576">
    <property type="term" value="C:extracellular region"/>
    <property type="evidence" value="ECO:0007669"/>
    <property type="project" value="UniProtKB-SubCell"/>
</dbReference>
<dbReference type="GO" id="GO:0016787">
    <property type="term" value="F:hydrolase activity"/>
    <property type="evidence" value="ECO:0007669"/>
    <property type="project" value="UniProtKB-KW"/>
</dbReference>
<dbReference type="Gene3D" id="3.40.50.1820">
    <property type="entry name" value="alpha/beta hydrolase"/>
    <property type="match status" value="1"/>
</dbReference>
<dbReference type="InterPro" id="IPR000073">
    <property type="entry name" value="AB_hydrolase_1"/>
</dbReference>
<dbReference type="InterPro" id="IPR029058">
    <property type="entry name" value="AB_hydrolase_fold"/>
</dbReference>
<dbReference type="InterPro" id="IPR052897">
    <property type="entry name" value="Sec-Metab_Biosynth_Hydrolase"/>
</dbReference>
<dbReference type="PANTHER" id="PTHR37017">
    <property type="entry name" value="AB HYDROLASE-1 DOMAIN-CONTAINING PROTEIN-RELATED"/>
    <property type="match status" value="1"/>
</dbReference>
<dbReference type="PANTHER" id="PTHR37017:SF11">
    <property type="entry name" value="ESTERASE_LIPASE_THIOESTERASE DOMAIN-CONTAINING PROTEIN"/>
    <property type="match status" value="1"/>
</dbReference>
<dbReference type="Pfam" id="PF12697">
    <property type="entry name" value="Abhydrolase_6"/>
    <property type="match status" value="1"/>
</dbReference>
<dbReference type="SUPFAM" id="SSF53474">
    <property type="entry name" value="alpha/beta-Hydrolases"/>
    <property type="match status" value="1"/>
</dbReference>
<accession>C8CP46</accession>
<sequence length="242" mass="26328">MANFVLVHGAWHGGWCYRDTAAALRKAGHRVLTPTHTGVGQRAHLSGENVTLETHIRDVLGCIEAEELDDVILVGHSYGGMVITGVADRIAPKIRSLVYLDAFVPEHGDSLMALLPKALPPEVSAQFIGGFHAAALDKHCGLMQPIPAELFNVVADKRDWVNRRCVPQALATYEMPLLLAGGGSAVKQRVYILADGWDPSPFRYFAKLYDGKPGWQVVKFPCGHDVMVDMPNELAEKLAALG</sequence>
<protein>
    <recommendedName>
        <fullName evidence="4">Carbendazim hydrolyzing esterase</fullName>
        <ecNumber evidence="2">3.1.1.122</ecNumber>
    </recommendedName>
    <alternativeName>
        <fullName evidence="4">Methyl-1H-benzimidazol-2-ylcarbamate-hydrolyzing enzyme</fullName>
        <shortName evidence="4">MBC-hydrolyzing enzyme</shortName>
    </alternativeName>
</protein>
<keyword id="KW-0903">Direct protein sequencing</keyword>
<keyword id="KW-0378">Hydrolase</keyword>
<keyword id="KW-0964">Secreted</keyword>
<feature type="chain" id="PRO_0000460868" description="Carbendazim hydrolyzing esterase">
    <location>
        <begin position="1"/>
        <end position="242"/>
    </location>
</feature>
<feature type="active site" description="Acyl-ester intermediate" evidence="1">
    <location>
        <position position="77"/>
    </location>
</feature>
<comment type="function">
    <text evidence="2 3 5">Catalyzes the hydrolysis of the fungicide carbendazim (methyl-1H-benzimidazol-2-ylcarbamate or MBC) to 2-aminobenzimidazole (2-AB) (PubMed:20228105). Following hydrolysis of the carbamate ester, the carbamate decarboxylates spontaneously (Probable). Can hydrolyze model carboxylesters such as methyl salicylate, alpha-naphthyl acetate and p-nitrophenyl acetate (PubMed:20228105). In addition, shows substantial hydrolytic activity in vitro against widespread pollutants with carboxylester, carbamate and amide linkages, such as dimethyl phthalate, propanil and chlorpropham (PubMed:37660276).</text>
</comment>
<comment type="catalytic activity">
    <reaction evidence="2">
        <text>carbendazim + H2O = 2-aminobenzimidazole + methanol + CO2</text>
        <dbReference type="Rhea" id="RHEA:78411"/>
        <dbReference type="ChEBI" id="CHEBI:3392"/>
        <dbReference type="ChEBI" id="CHEBI:15377"/>
        <dbReference type="ChEBI" id="CHEBI:16526"/>
        <dbReference type="ChEBI" id="CHEBI:17790"/>
        <dbReference type="ChEBI" id="CHEBI:27822"/>
        <dbReference type="EC" id="3.1.1.122"/>
    </reaction>
</comment>
<comment type="catalytic activity">
    <reaction evidence="5">
        <text>carbendazim + H2O = N-(1H-1,3-benzodiazol-2-yl)carbamate + methanol + H(+)</text>
        <dbReference type="Rhea" id="RHEA:78415"/>
        <dbReference type="ChEBI" id="CHEBI:3392"/>
        <dbReference type="ChEBI" id="CHEBI:15377"/>
        <dbReference type="ChEBI" id="CHEBI:15378"/>
        <dbReference type="ChEBI" id="CHEBI:17790"/>
        <dbReference type="ChEBI" id="CHEBI:228250"/>
    </reaction>
</comment>
<comment type="catalytic activity">
    <reaction evidence="5">
        <text>N-(1H-1,3-benzodiazol-2-yl)carbamate + H(+) = 2-aminobenzimidazole + CO2</text>
        <dbReference type="Rhea" id="RHEA:78419"/>
        <dbReference type="ChEBI" id="CHEBI:15378"/>
        <dbReference type="ChEBI" id="CHEBI:16526"/>
        <dbReference type="ChEBI" id="CHEBI:27822"/>
        <dbReference type="ChEBI" id="CHEBI:228250"/>
    </reaction>
</comment>
<comment type="biophysicochemical properties">
    <kinetics>
        <KM evidence="2">6.1 uM for carbendazim</KM>
        <text evidence="2">kcat is 170 min(-1) with carbendazim as substrate.</text>
    </kinetics>
</comment>
<comment type="subcellular location">
    <subcellularLocation>
        <location evidence="2">Secreted</location>
    </subcellularLocation>
</comment>
<comment type="induction">
    <text evidence="2">Constitutively expressed.</text>
</comment>
<comment type="biotechnology">
    <text evidence="2 3">Candidate bioremediation enzyme, which could be used for the degradation of carbendazim, a widely used fungicide that is quite stable in soil and water and poses potential threats to human health (PubMed:20228105). In addition, due to its broad substrate range, MheI has potential as a bioremediation agent against various pollutants that can be detoxified by hydrolytic cleavage of some carboxylester, carbamate or amide linkages (PubMed:37660276).</text>
</comment>
<comment type="similarity">
    <text evidence="5">Belongs to the AB hydrolase superfamily.</text>
</comment>
<evidence type="ECO:0000250" key="1">
    <source>
        <dbReference type="UniProtKB" id="Q6RYA0"/>
    </source>
</evidence>
<evidence type="ECO:0000269" key="2">
    <source>
    </source>
</evidence>
<evidence type="ECO:0000269" key="3">
    <source>
    </source>
</evidence>
<evidence type="ECO:0000303" key="4">
    <source>
    </source>
</evidence>
<evidence type="ECO:0000305" key="5"/>
<gene>
    <name evidence="4" type="primary">mheI</name>
</gene>
<organism>
    <name type="scientific">Nocardioides sp. (strain SG-4G)</name>
    <dbReference type="NCBI Taxonomy" id="670481"/>
    <lineage>
        <taxon>Bacteria</taxon>
        <taxon>Bacillati</taxon>
        <taxon>Actinomycetota</taxon>
        <taxon>Actinomycetes</taxon>
        <taxon>Propionibacteriales</taxon>
        <taxon>Nocardioidaceae</taxon>
        <taxon>Nocardioides</taxon>
    </lineage>
</organism>